<keyword id="KW-0687">Ribonucleoprotein</keyword>
<keyword id="KW-0689">Ribosomal protein</keyword>
<reference key="1">
    <citation type="journal article" date="2006" name="J. Bacteriol.">
        <title>Complete genome sequence of Yersinia pestis strains Antiqua and Nepal516: evidence of gene reduction in an emerging pathogen.</title>
        <authorList>
            <person name="Chain P.S.G."/>
            <person name="Hu P."/>
            <person name="Malfatti S.A."/>
            <person name="Radnedge L."/>
            <person name="Larimer F."/>
            <person name="Vergez L.M."/>
            <person name="Worsham P."/>
            <person name="Chu M.C."/>
            <person name="Andersen G.L."/>
        </authorList>
    </citation>
    <scope>NUCLEOTIDE SEQUENCE [LARGE SCALE GENOMIC DNA]</scope>
    <source>
        <strain>Nepal516</strain>
    </source>
</reference>
<reference key="2">
    <citation type="submission" date="2009-04" db="EMBL/GenBank/DDBJ databases">
        <title>Yersinia pestis Nepal516A whole genome shotgun sequencing project.</title>
        <authorList>
            <person name="Plunkett G. III"/>
            <person name="Anderson B.D."/>
            <person name="Baumler D.J."/>
            <person name="Burland V."/>
            <person name="Cabot E.L."/>
            <person name="Glasner J.D."/>
            <person name="Mau B."/>
            <person name="Neeno-Eckwall E."/>
            <person name="Perna N.T."/>
            <person name="Munk A.C."/>
            <person name="Tapia R."/>
            <person name="Green L.D."/>
            <person name="Rogers Y.C."/>
            <person name="Detter J.C."/>
            <person name="Bruce D.C."/>
            <person name="Brettin T.S."/>
        </authorList>
    </citation>
    <scope>NUCLEOTIDE SEQUENCE [LARGE SCALE GENOMIC DNA]</scope>
    <source>
        <strain>Nepal516</strain>
    </source>
</reference>
<comment type="function">
    <text evidence="1">Forms part of the ribosomal stalk which helps the ribosome interact with GTP-bound translation factors. Is thus essential for accurate translation.</text>
</comment>
<comment type="subunit">
    <text evidence="1">Homodimer. Part of the ribosomal stalk of the 50S ribosomal subunit. Forms a multimeric L10(L12)X complex, where L10 forms an elongated spine to which 2 to 4 L12 dimers bind in a sequential fashion. Binds GTP-bound translation factors.</text>
</comment>
<comment type="similarity">
    <text evidence="1">Belongs to the bacterial ribosomal protein bL12 family.</text>
</comment>
<organism>
    <name type="scientific">Yersinia pestis bv. Antiqua (strain Nepal516)</name>
    <dbReference type="NCBI Taxonomy" id="377628"/>
    <lineage>
        <taxon>Bacteria</taxon>
        <taxon>Pseudomonadati</taxon>
        <taxon>Pseudomonadota</taxon>
        <taxon>Gammaproteobacteria</taxon>
        <taxon>Enterobacterales</taxon>
        <taxon>Yersiniaceae</taxon>
        <taxon>Yersinia</taxon>
    </lineage>
</organism>
<name>RL7_YERPN</name>
<dbReference type="EMBL" id="CP000305">
    <property type="protein sequence ID" value="ABG16551.1"/>
    <property type="molecule type" value="Genomic_DNA"/>
</dbReference>
<dbReference type="EMBL" id="ACNQ01000004">
    <property type="protein sequence ID" value="EEO78469.1"/>
    <property type="molecule type" value="Genomic_DNA"/>
</dbReference>
<dbReference type="RefSeq" id="WP_002210675.1">
    <property type="nucleotide sequence ID" value="NZ_ACNQ01000004.1"/>
</dbReference>
<dbReference type="SMR" id="Q1CN79"/>
<dbReference type="GeneID" id="96663775"/>
<dbReference type="KEGG" id="ypn:YPN_0218"/>
<dbReference type="HOGENOM" id="CLU_086499_3_2_6"/>
<dbReference type="Proteomes" id="UP000008936">
    <property type="component" value="Chromosome"/>
</dbReference>
<dbReference type="GO" id="GO:0022625">
    <property type="term" value="C:cytosolic large ribosomal subunit"/>
    <property type="evidence" value="ECO:0007669"/>
    <property type="project" value="TreeGrafter"/>
</dbReference>
<dbReference type="GO" id="GO:0003729">
    <property type="term" value="F:mRNA binding"/>
    <property type="evidence" value="ECO:0007669"/>
    <property type="project" value="TreeGrafter"/>
</dbReference>
<dbReference type="GO" id="GO:0003735">
    <property type="term" value="F:structural constituent of ribosome"/>
    <property type="evidence" value="ECO:0007669"/>
    <property type="project" value="InterPro"/>
</dbReference>
<dbReference type="GO" id="GO:0006412">
    <property type="term" value="P:translation"/>
    <property type="evidence" value="ECO:0007669"/>
    <property type="project" value="UniProtKB-UniRule"/>
</dbReference>
<dbReference type="CDD" id="cd00387">
    <property type="entry name" value="Ribosomal_L7_L12"/>
    <property type="match status" value="1"/>
</dbReference>
<dbReference type="FunFam" id="3.30.1390.10:FF:000001">
    <property type="entry name" value="50S ribosomal protein L7/L12"/>
    <property type="match status" value="1"/>
</dbReference>
<dbReference type="Gene3D" id="3.30.1390.10">
    <property type="match status" value="1"/>
</dbReference>
<dbReference type="Gene3D" id="1.20.5.710">
    <property type="entry name" value="Single helix bin"/>
    <property type="match status" value="1"/>
</dbReference>
<dbReference type="HAMAP" id="MF_00368">
    <property type="entry name" value="Ribosomal_bL12"/>
    <property type="match status" value="1"/>
</dbReference>
<dbReference type="InterPro" id="IPR000206">
    <property type="entry name" value="Ribosomal_bL12"/>
</dbReference>
<dbReference type="InterPro" id="IPR013823">
    <property type="entry name" value="Ribosomal_bL12_C"/>
</dbReference>
<dbReference type="InterPro" id="IPR014719">
    <property type="entry name" value="Ribosomal_bL12_C/ClpS-like"/>
</dbReference>
<dbReference type="InterPro" id="IPR008932">
    <property type="entry name" value="Ribosomal_bL12_oligo"/>
</dbReference>
<dbReference type="InterPro" id="IPR036235">
    <property type="entry name" value="Ribosomal_bL12_oligo_N_sf"/>
</dbReference>
<dbReference type="NCBIfam" id="TIGR00855">
    <property type="entry name" value="L12"/>
    <property type="match status" value="1"/>
</dbReference>
<dbReference type="PANTHER" id="PTHR45987">
    <property type="entry name" value="39S RIBOSOMAL PROTEIN L12"/>
    <property type="match status" value="1"/>
</dbReference>
<dbReference type="PANTHER" id="PTHR45987:SF4">
    <property type="entry name" value="LARGE RIBOSOMAL SUBUNIT PROTEIN BL12M"/>
    <property type="match status" value="1"/>
</dbReference>
<dbReference type="Pfam" id="PF00542">
    <property type="entry name" value="Ribosomal_L12"/>
    <property type="match status" value="1"/>
</dbReference>
<dbReference type="Pfam" id="PF16320">
    <property type="entry name" value="Ribosomal_L12_N"/>
    <property type="match status" value="1"/>
</dbReference>
<dbReference type="SUPFAM" id="SSF54736">
    <property type="entry name" value="ClpS-like"/>
    <property type="match status" value="1"/>
</dbReference>
<dbReference type="SUPFAM" id="SSF48300">
    <property type="entry name" value="Ribosomal protein L7/12, oligomerisation (N-terminal) domain"/>
    <property type="match status" value="1"/>
</dbReference>
<evidence type="ECO:0000255" key="1">
    <source>
        <dbReference type="HAMAP-Rule" id="MF_00368"/>
    </source>
</evidence>
<evidence type="ECO:0000305" key="2"/>
<gene>
    <name evidence="1" type="primary">rplL</name>
    <name type="ordered locus">YPN_0218</name>
    <name type="ORF">YP516_0195</name>
</gene>
<accession>Q1CN79</accession>
<accession>C4GNE5</accession>
<feature type="chain" id="PRO_1000007113" description="Large ribosomal subunit protein bL12">
    <location>
        <begin position="1"/>
        <end position="122"/>
    </location>
</feature>
<proteinExistence type="inferred from homology"/>
<protein>
    <recommendedName>
        <fullName evidence="1">Large ribosomal subunit protein bL12</fullName>
    </recommendedName>
    <alternativeName>
        <fullName evidence="2">50S ribosomal protein L7/L12</fullName>
    </alternativeName>
</protein>
<sequence>MSTITKDQILEGVAALSVMEIVELISAMEEKFGVSAAAVAAGPAAAVEAAEEQTEFDVVLASFGENKVAVIKAVRGATGLGLKEAKDLVESAPAVLKEGVNKDEAETLKKSLEEAGASVEIK</sequence>